<comment type="catalytic activity">
    <reaction>
        <text>1-aminocyclopropane-1-carboxylate + L-ascorbate + O2 = ethene + L-dehydroascorbate + hydrogen cyanide + CO2 + 2 H2O</text>
        <dbReference type="Rhea" id="RHEA:23640"/>
        <dbReference type="ChEBI" id="CHEBI:15377"/>
        <dbReference type="ChEBI" id="CHEBI:15379"/>
        <dbReference type="ChEBI" id="CHEBI:16526"/>
        <dbReference type="ChEBI" id="CHEBI:18153"/>
        <dbReference type="ChEBI" id="CHEBI:18407"/>
        <dbReference type="ChEBI" id="CHEBI:38290"/>
        <dbReference type="ChEBI" id="CHEBI:58360"/>
        <dbReference type="ChEBI" id="CHEBI:58539"/>
        <dbReference type="EC" id="1.14.17.4"/>
    </reaction>
</comment>
<comment type="cofactor">
    <cofactor evidence="1">
        <name>Fe cation</name>
        <dbReference type="ChEBI" id="CHEBI:24875"/>
    </cofactor>
</comment>
<comment type="pathway">
    <text>Alkene biosynthesis; ethylene biosynthesis via S-adenosyl-L-methionine; ethylene from S-adenosyl-L-methionine: step 2/2.</text>
</comment>
<comment type="induction">
    <text evidence="3">By pollination.</text>
</comment>
<comment type="similarity">
    <text evidence="4">Belongs to the iron/ascorbate-dependent oxidoreductase family.</text>
</comment>
<name>ACCO2_DORSP</name>
<dbReference type="EC" id="1.14.17.4"/>
<dbReference type="EMBL" id="L37103">
    <property type="protein sequence ID" value="AAA97488.1"/>
    <property type="molecule type" value="mRNA"/>
</dbReference>
<dbReference type="SMR" id="Q39705"/>
<dbReference type="UniPathway" id="UPA00384">
    <property type="reaction ID" value="UER00563"/>
</dbReference>
<dbReference type="GO" id="GO:0009815">
    <property type="term" value="F:1-aminocyclopropane-1-carboxylate oxidase activity"/>
    <property type="evidence" value="ECO:0007669"/>
    <property type="project" value="UniProtKB-EC"/>
</dbReference>
<dbReference type="GO" id="GO:0031418">
    <property type="term" value="F:L-ascorbic acid binding"/>
    <property type="evidence" value="ECO:0007669"/>
    <property type="project" value="UniProtKB-KW"/>
</dbReference>
<dbReference type="GO" id="GO:0046872">
    <property type="term" value="F:metal ion binding"/>
    <property type="evidence" value="ECO:0007669"/>
    <property type="project" value="UniProtKB-KW"/>
</dbReference>
<dbReference type="GO" id="GO:0009693">
    <property type="term" value="P:ethylene biosynthetic process"/>
    <property type="evidence" value="ECO:0007669"/>
    <property type="project" value="UniProtKB-UniPathway"/>
</dbReference>
<dbReference type="GO" id="GO:0009835">
    <property type="term" value="P:fruit ripening"/>
    <property type="evidence" value="ECO:0007669"/>
    <property type="project" value="UniProtKB-KW"/>
</dbReference>
<dbReference type="FunFam" id="2.60.120.330:FF:000002">
    <property type="entry name" value="1-aminocyclopropane-1-carboxylate oxidase 1"/>
    <property type="match status" value="1"/>
</dbReference>
<dbReference type="Gene3D" id="2.60.120.330">
    <property type="entry name" value="B-lactam Antibiotic, Isopenicillin N Synthase, Chain"/>
    <property type="match status" value="1"/>
</dbReference>
<dbReference type="InterPro" id="IPR026992">
    <property type="entry name" value="DIOX_N"/>
</dbReference>
<dbReference type="InterPro" id="IPR044861">
    <property type="entry name" value="IPNS-like_FE2OG_OXY"/>
</dbReference>
<dbReference type="InterPro" id="IPR027443">
    <property type="entry name" value="IPNS-like_sf"/>
</dbReference>
<dbReference type="InterPro" id="IPR005123">
    <property type="entry name" value="Oxoglu/Fe-dep_dioxygenase_dom"/>
</dbReference>
<dbReference type="InterPro" id="IPR050295">
    <property type="entry name" value="Plant_2OG-oxidoreductases"/>
</dbReference>
<dbReference type="PANTHER" id="PTHR47991">
    <property type="entry name" value="OXOGLUTARATE/IRON-DEPENDENT DIOXYGENASE"/>
    <property type="match status" value="1"/>
</dbReference>
<dbReference type="Pfam" id="PF03171">
    <property type="entry name" value="2OG-FeII_Oxy"/>
    <property type="match status" value="1"/>
</dbReference>
<dbReference type="Pfam" id="PF14226">
    <property type="entry name" value="DIOX_N"/>
    <property type="match status" value="1"/>
</dbReference>
<dbReference type="SUPFAM" id="SSF51197">
    <property type="entry name" value="Clavaminate synthase-like"/>
    <property type="match status" value="1"/>
</dbReference>
<dbReference type="PROSITE" id="PS51471">
    <property type="entry name" value="FE2OG_OXY"/>
    <property type="match status" value="1"/>
</dbReference>
<evidence type="ECO:0000250" key="1"/>
<evidence type="ECO:0000255" key="2">
    <source>
        <dbReference type="PROSITE-ProRule" id="PRU00805"/>
    </source>
</evidence>
<evidence type="ECO:0000269" key="3">
    <source>
    </source>
</evidence>
<evidence type="ECO:0000305" key="4"/>
<sequence>MESGSFPVINMELLQGSQRPAAMALLRDACENWGFFELLNHGISHELMNRVEAVNKEHYRRFREQRFKEFASKTLDSVENVDPDNLDWESTFFLRHLPTSNISQIPDLDDDCRATMKEFARELEKLAERLLDLLCEDLGLEKGYLKRVFCGGSDGLPTFGTKVSNYPPCPKPDLIKGLRAHTDAGGIILLFQDDKVSGLQLLKDREWIEVPPLRYSIVVNIGDQLEVITNGKYKSVLHRVVAQTDGNRMSIASFYNPGSDAVIFPAPALVEKEAEEEEKKEIYPKFVFQDYMNLYIRKKFEAKEPRFEAMKSMEIVMSSQPIPTA</sequence>
<keyword id="KW-0266">Ethylene biosynthesis</keyword>
<keyword id="KW-0292">Fruit ripening</keyword>
<keyword id="KW-0408">Iron</keyword>
<keyword id="KW-0479">Metal-binding</keyword>
<keyword id="KW-0560">Oxidoreductase</keyword>
<keyword id="KW-0847">Vitamin C</keyword>
<proteinExistence type="evidence at transcript level"/>
<protein>
    <recommendedName>
        <fullName>1-aminocyclopropane-1-carboxylate oxidase 2</fullName>
        <shortName>ACC oxidase 2</shortName>
        <ecNumber>1.14.17.4</ecNumber>
    </recommendedName>
    <alternativeName>
        <fullName>Ethylene-forming enzyme</fullName>
        <shortName>EFE</shortName>
    </alternativeName>
</protein>
<reference key="1">
    <citation type="journal article" date="1995" name="Plant Physiol.">
        <title>Nucleotide sequence of a cDNA encoding 1-aminocyclopropane-1-carboxylate oxidase from senescing orchid petals.</title>
        <authorList>
            <person name="Nadeau J.A."/>
            <person name="O'Neill S.D."/>
        </authorList>
    </citation>
    <scope>NUCLEOTIDE SEQUENCE [MRNA]</scope>
    <scope>INDUCTION</scope>
    <source>
        <strain>cv. Hausermann's red bird 'Cardinal'</strain>
        <tissue>Perianth</tissue>
    </source>
</reference>
<accession>Q39705</accession>
<organism>
    <name type="scientific">Doritaenopsis sp.</name>
    <name type="common">Moth orchid</name>
    <dbReference type="NCBI Taxonomy" id="4749"/>
    <lineage>
        <taxon>Eukaryota</taxon>
        <taxon>Viridiplantae</taxon>
        <taxon>Streptophyta</taxon>
        <taxon>Embryophyta</taxon>
        <taxon>Tracheophyta</taxon>
        <taxon>Spermatophyta</taxon>
        <taxon>Magnoliopsida</taxon>
        <taxon>Liliopsida</taxon>
        <taxon>Asparagales</taxon>
        <taxon>Orchidaceae</taxon>
        <taxon>Epidendroideae</taxon>
        <taxon>Vandeae</taxon>
        <taxon>Aeridinae</taxon>
        <taxon>x Doritaenopsis</taxon>
    </lineage>
</organism>
<feature type="chain" id="PRO_0000067260" description="1-aminocyclopropane-1-carboxylate oxidase 2">
    <location>
        <begin position="1"/>
        <end position="325"/>
    </location>
</feature>
<feature type="domain" description="Fe2OG dioxygenase" evidence="2">
    <location>
        <begin position="157"/>
        <end position="257"/>
    </location>
</feature>
<feature type="binding site" evidence="2">
    <location>
        <position position="181"/>
    </location>
    <ligand>
        <name>Fe cation</name>
        <dbReference type="ChEBI" id="CHEBI:24875"/>
    </ligand>
</feature>
<feature type="binding site" evidence="2">
    <location>
        <position position="183"/>
    </location>
    <ligand>
        <name>Fe cation</name>
        <dbReference type="ChEBI" id="CHEBI:24875"/>
    </ligand>
</feature>
<feature type="binding site" evidence="2">
    <location>
        <position position="238"/>
    </location>
    <ligand>
        <name>Fe cation</name>
        <dbReference type="ChEBI" id="CHEBI:24875"/>
    </ligand>
</feature>
<gene>
    <name type="primary">ACO2</name>
</gene>